<organism>
    <name type="scientific">Eremothecium gossypii (strain ATCC 10895 / CBS 109.51 / FGSC 9923 / NRRL Y-1056)</name>
    <name type="common">Yeast</name>
    <name type="synonym">Ashbya gossypii</name>
    <dbReference type="NCBI Taxonomy" id="284811"/>
    <lineage>
        <taxon>Eukaryota</taxon>
        <taxon>Fungi</taxon>
        <taxon>Dikarya</taxon>
        <taxon>Ascomycota</taxon>
        <taxon>Saccharomycotina</taxon>
        <taxon>Saccharomycetes</taxon>
        <taxon>Saccharomycetales</taxon>
        <taxon>Saccharomycetaceae</taxon>
        <taxon>Eremothecium</taxon>
    </lineage>
</organism>
<accession>Q74ZV8</accession>
<gene>
    <name type="primary">ARP6</name>
    <name type="ordered locus">AGR091W</name>
</gene>
<protein>
    <recommendedName>
        <fullName>Actin-like protein ARP6</fullName>
    </recommendedName>
</protein>
<dbReference type="EMBL" id="AE016820">
    <property type="protein sequence ID" value="AAS54580.1"/>
    <property type="molecule type" value="Genomic_DNA"/>
</dbReference>
<dbReference type="RefSeq" id="NP_986756.1">
    <property type="nucleotide sequence ID" value="NM_211818.1"/>
</dbReference>
<dbReference type="SMR" id="Q74ZV8"/>
<dbReference type="FunCoup" id="Q74ZV8">
    <property type="interactions" value="371"/>
</dbReference>
<dbReference type="STRING" id="284811.Q74ZV8"/>
<dbReference type="EnsemblFungi" id="AAS54580">
    <property type="protein sequence ID" value="AAS54580"/>
    <property type="gene ID" value="AGOS_AGR091W"/>
</dbReference>
<dbReference type="GeneID" id="4623058"/>
<dbReference type="KEGG" id="ago:AGOS_AGR091W"/>
<dbReference type="eggNOG" id="KOG0680">
    <property type="taxonomic scope" value="Eukaryota"/>
</dbReference>
<dbReference type="HOGENOM" id="CLU_027965_1_1_1"/>
<dbReference type="InParanoid" id="Q74ZV8"/>
<dbReference type="OMA" id="FFEEYEC"/>
<dbReference type="OrthoDB" id="6220758at2759"/>
<dbReference type="Proteomes" id="UP000000591">
    <property type="component" value="Chromosome VII"/>
</dbReference>
<dbReference type="GO" id="GO:0005737">
    <property type="term" value="C:cytoplasm"/>
    <property type="evidence" value="ECO:0007669"/>
    <property type="project" value="UniProtKB-SubCell"/>
</dbReference>
<dbReference type="GO" id="GO:0005856">
    <property type="term" value="C:cytoskeleton"/>
    <property type="evidence" value="ECO:0007669"/>
    <property type="project" value="UniProtKB-SubCell"/>
</dbReference>
<dbReference type="GO" id="GO:0034399">
    <property type="term" value="C:nuclear periphery"/>
    <property type="evidence" value="ECO:0007669"/>
    <property type="project" value="EnsemblFungi"/>
</dbReference>
<dbReference type="GO" id="GO:0000812">
    <property type="term" value="C:Swr1 complex"/>
    <property type="evidence" value="ECO:0000318"/>
    <property type="project" value="GO_Central"/>
</dbReference>
<dbReference type="GO" id="GO:0031491">
    <property type="term" value="F:nucleosome binding"/>
    <property type="evidence" value="ECO:0000318"/>
    <property type="project" value="GO_Central"/>
</dbReference>
<dbReference type="GO" id="GO:0006338">
    <property type="term" value="P:chromatin remodeling"/>
    <property type="evidence" value="ECO:0007669"/>
    <property type="project" value="EnsemblFungi"/>
</dbReference>
<dbReference type="CDD" id="cd10210">
    <property type="entry name" value="ASKHA_NBD_Arp6"/>
    <property type="match status" value="1"/>
</dbReference>
<dbReference type="FunFam" id="3.90.640.10:FF:000040">
    <property type="entry name" value="Actin-like protein ARP6"/>
    <property type="match status" value="1"/>
</dbReference>
<dbReference type="Gene3D" id="3.30.420.40">
    <property type="match status" value="2"/>
</dbReference>
<dbReference type="Gene3D" id="3.90.640.10">
    <property type="entry name" value="Actin, Chain A, domain 4"/>
    <property type="match status" value="1"/>
</dbReference>
<dbReference type="InterPro" id="IPR004000">
    <property type="entry name" value="Actin"/>
</dbReference>
<dbReference type="InterPro" id="IPR043129">
    <property type="entry name" value="ATPase_NBD"/>
</dbReference>
<dbReference type="PANTHER" id="PTHR11937">
    <property type="entry name" value="ACTIN"/>
    <property type="match status" value="1"/>
</dbReference>
<dbReference type="Pfam" id="PF00022">
    <property type="entry name" value="Actin"/>
    <property type="match status" value="1"/>
</dbReference>
<dbReference type="SMART" id="SM00268">
    <property type="entry name" value="ACTIN"/>
    <property type="match status" value="1"/>
</dbReference>
<dbReference type="SUPFAM" id="SSF53067">
    <property type="entry name" value="Actin-like ATPase domain"/>
    <property type="match status" value="2"/>
</dbReference>
<evidence type="ECO:0000250" key="1"/>
<evidence type="ECO:0000305" key="2"/>
<proteinExistence type="inferred from homology"/>
<feature type="chain" id="PRO_0000089110" description="Actin-like protein ARP6">
    <location>
        <begin position="1"/>
        <end position="410"/>
    </location>
</feature>
<keyword id="KW-0010">Activator</keyword>
<keyword id="KW-0156">Chromatin regulator</keyword>
<keyword id="KW-0963">Cytoplasm</keyword>
<keyword id="KW-0206">Cytoskeleton</keyword>
<keyword id="KW-0539">Nucleus</keyword>
<keyword id="KW-1185">Reference proteome</keyword>
<keyword id="KW-0804">Transcription</keyword>
<keyword id="KW-0805">Transcription regulation</keyword>
<comment type="function">
    <text evidence="1">Component of the SWR1 complex which mediates the ATP-dependent exchange of histone H2A for the H2A variant HZT1 leading to transcriptional regulation of selected genes by chromatin remodeling. Involved in chromosome stability (By similarity).</text>
</comment>
<comment type="subunit">
    <text evidence="1">Component of the SWR1 chromatin remodeling complex.</text>
</comment>
<comment type="subcellular location">
    <subcellularLocation>
        <location evidence="1">Cytoplasm</location>
    </subcellularLocation>
    <subcellularLocation>
        <location evidence="1">Cytoplasm</location>
        <location evidence="1">Cytoskeleton</location>
    </subcellularLocation>
    <subcellularLocation>
        <location evidence="1">Nucleus</location>
    </subcellularLocation>
</comment>
<comment type="similarity">
    <text evidence="2">Belongs to the actin family. ARP6 subfamily.</text>
</comment>
<reference key="1">
    <citation type="journal article" date="2004" name="Science">
        <title>The Ashbya gossypii genome as a tool for mapping the ancient Saccharomyces cerevisiae genome.</title>
        <authorList>
            <person name="Dietrich F.S."/>
            <person name="Voegeli S."/>
            <person name="Brachat S."/>
            <person name="Lerch A."/>
            <person name="Gates K."/>
            <person name="Steiner S."/>
            <person name="Mohr C."/>
            <person name="Poehlmann R."/>
            <person name="Luedi P."/>
            <person name="Choi S."/>
            <person name="Wing R.A."/>
            <person name="Flavier A."/>
            <person name="Gaffney T.D."/>
            <person name="Philippsen P."/>
        </authorList>
    </citation>
    <scope>NUCLEOTIDE SEQUENCE [LARGE SCALE GENOMIC DNA]</scope>
    <source>
        <strain>ATCC 10895 / CBS 109.51 / FGSC 9923 / NRRL Y-1056</strain>
    </source>
</reference>
<reference key="2">
    <citation type="journal article" date="2013" name="G3 (Bethesda)">
        <title>Genomes of Ashbya fungi isolated from insects reveal four mating-type loci, numerous translocations, lack of transposons, and distinct gene duplications.</title>
        <authorList>
            <person name="Dietrich F.S."/>
            <person name="Voegeli S."/>
            <person name="Kuo S."/>
            <person name="Philippsen P."/>
        </authorList>
    </citation>
    <scope>GENOME REANNOTATION</scope>
    <source>
        <strain>ATCC 10895 / CBS 109.51 / FGSC 9923 / NRRL Y-1056</strain>
    </source>
</reference>
<sequence>MRVPLLMENGSYEIKFGPANLETPYRARNCLTRDRYGRYHLSNQMDQIRDISHCHIRRPSELGQLISWELEEQIWDYCLFNPDEFGWELKDSKDVDLIASETCMTIPEISKNMDQVVFEEYEFGSMMKCPVAQFVPFDRARDYDIVGGAGEVVEAKSGYNNFQLVVDSGFNCTWVMPVIKGVPYYKATKKLDIGGRFLNGLLKETISFRHYNVMDETILINNIKEQCCFMPPVSYFDSFQRKEETRVEYILPDFQTSLIGYVRQPKQAIPKTSQILRLEDELFTVPETFFHPEISNILKPGLVETILECVSMVPEVLRPLLVSNIVAVGGNFNIANFATRLATELQRQCPTDWKVRVHQPKLDAALQGWKSMRQFSQTDSYKNSRVTRSEYLEHGADWCTKHRFGYEQWI</sequence>
<name>ARP6_EREGS</name>